<accession>A6U257</accession>
<evidence type="ECO:0000255" key="1">
    <source>
        <dbReference type="HAMAP-Rule" id="MF_00071"/>
    </source>
</evidence>
<reference key="1">
    <citation type="submission" date="2007-06" db="EMBL/GenBank/DDBJ databases">
        <title>Complete sequence of chromosome of Staphylococcus aureus subsp. aureus JH1.</title>
        <authorList>
            <consortium name="US DOE Joint Genome Institute"/>
            <person name="Copeland A."/>
            <person name="Lucas S."/>
            <person name="Lapidus A."/>
            <person name="Barry K."/>
            <person name="Detter J.C."/>
            <person name="Glavina del Rio T."/>
            <person name="Hammon N."/>
            <person name="Israni S."/>
            <person name="Dalin E."/>
            <person name="Tice H."/>
            <person name="Pitluck S."/>
            <person name="Chain P."/>
            <person name="Malfatti S."/>
            <person name="Shin M."/>
            <person name="Vergez L."/>
            <person name="Schmutz J."/>
            <person name="Larimer F."/>
            <person name="Land M."/>
            <person name="Hauser L."/>
            <person name="Kyrpides N."/>
            <person name="Ivanova N."/>
            <person name="Tomasz A."/>
            <person name="Richardson P."/>
        </authorList>
    </citation>
    <scope>NUCLEOTIDE SEQUENCE [LARGE SCALE GENOMIC DNA]</scope>
    <source>
        <strain>JH1</strain>
    </source>
</reference>
<keyword id="KW-1003">Cell membrane</keyword>
<keyword id="KW-0342">GTP-binding</keyword>
<keyword id="KW-0378">Hydrolase</keyword>
<keyword id="KW-0472">Membrane</keyword>
<keyword id="KW-0547">Nucleotide-binding</keyword>
<keyword id="KW-0648">Protein biosynthesis</keyword>
<sequence>MDNEQRLKRRENIRNFSIIAHIDHGKSTLADRILENTKSVETRDMQDQLLDSMDLERERGITIKLNAVRLKYEAKDGNTYTFHLIDTPGHVDFTYEVSRSLAACEGAILVVDAAQGIEAQTLANVYLALDNELELLPVINKIDLPAAEPERVKQEIEDMIGLDQDDVVLASAKSNIGIEEILEKIVEVVPAPDGDPEAPLKALIFDSEYDPYRGVISSIRIVDGVVKAGDKIRMMATGKEFEVTEVGINTPKQLPVDELTVGDVGYIIASIKNVDDSRVGDTITLASRPASEPLQGYKKMNPMVYCGLFPIDNKNYNDLREALEKLQLNDASLEFEPESSQALGFGYRTGFLGMLHMEIIQERIEREFGIELIATAPSVIYQCILRDGSEVTVDNPAQMPDRDKIDKIFEPYVRATMMVPNDYVGAVMELCQRKRGQFINMDYLDDIRVNIVYELPLAEVVFDFFDQLKSNTKGYASFDYEFIENKESNLVKMDILLNGDKVDALSFIVHRDFAYERGKALVEKLKTLIPRQQFEVPVQAAIGQKIVARTNIKSMGKNVLAKCYGGDISRKRKLLEKQKAGKAKMKAVGNVEIPQDAFLAVLKMDDE</sequence>
<comment type="function">
    <text evidence="1">Required for accurate and efficient protein synthesis under certain stress conditions. May act as a fidelity factor of the translation reaction, by catalyzing a one-codon backward translocation of tRNAs on improperly translocated ribosomes. Back-translocation proceeds from a post-translocation (POST) complex to a pre-translocation (PRE) complex, thus giving elongation factor G a second chance to translocate the tRNAs correctly. Binds to ribosomes in a GTP-dependent manner.</text>
</comment>
<comment type="catalytic activity">
    <reaction evidence="1">
        <text>GTP + H2O = GDP + phosphate + H(+)</text>
        <dbReference type="Rhea" id="RHEA:19669"/>
        <dbReference type="ChEBI" id="CHEBI:15377"/>
        <dbReference type="ChEBI" id="CHEBI:15378"/>
        <dbReference type="ChEBI" id="CHEBI:37565"/>
        <dbReference type="ChEBI" id="CHEBI:43474"/>
        <dbReference type="ChEBI" id="CHEBI:58189"/>
        <dbReference type="EC" id="3.6.5.n1"/>
    </reaction>
</comment>
<comment type="subcellular location">
    <subcellularLocation>
        <location evidence="1">Cell membrane</location>
        <topology evidence="1">Peripheral membrane protein</topology>
        <orientation evidence="1">Cytoplasmic side</orientation>
    </subcellularLocation>
</comment>
<comment type="similarity">
    <text evidence="1">Belongs to the TRAFAC class translation factor GTPase superfamily. Classic translation factor GTPase family. LepA subfamily.</text>
</comment>
<dbReference type="EC" id="3.6.5.n1" evidence="1"/>
<dbReference type="EMBL" id="CP000736">
    <property type="protein sequence ID" value="ABR52525.1"/>
    <property type="molecule type" value="Genomic_DNA"/>
</dbReference>
<dbReference type="SMR" id="A6U257"/>
<dbReference type="KEGG" id="sah:SaurJH1_1677"/>
<dbReference type="HOGENOM" id="CLU_009995_3_3_9"/>
<dbReference type="GO" id="GO:0005886">
    <property type="term" value="C:plasma membrane"/>
    <property type="evidence" value="ECO:0007669"/>
    <property type="project" value="UniProtKB-SubCell"/>
</dbReference>
<dbReference type="GO" id="GO:0005525">
    <property type="term" value="F:GTP binding"/>
    <property type="evidence" value="ECO:0007669"/>
    <property type="project" value="UniProtKB-UniRule"/>
</dbReference>
<dbReference type="GO" id="GO:0003924">
    <property type="term" value="F:GTPase activity"/>
    <property type="evidence" value="ECO:0007669"/>
    <property type="project" value="UniProtKB-UniRule"/>
</dbReference>
<dbReference type="GO" id="GO:0043022">
    <property type="term" value="F:ribosome binding"/>
    <property type="evidence" value="ECO:0007669"/>
    <property type="project" value="UniProtKB-UniRule"/>
</dbReference>
<dbReference type="GO" id="GO:0003746">
    <property type="term" value="F:translation elongation factor activity"/>
    <property type="evidence" value="ECO:0007669"/>
    <property type="project" value="UniProtKB-UniRule"/>
</dbReference>
<dbReference type="GO" id="GO:0045727">
    <property type="term" value="P:positive regulation of translation"/>
    <property type="evidence" value="ECO:0007669"/>
    <property type="project" value="UniProtKB-UniRule"/>
</dbReference>
<dbReference type="CDD" id="cd03699">
    <property type="entry name" value="EF4_II"/>
    <property type="match status" value="1"/>
</dbReference>
<dbReference type="CDD" id="cd16260">
    <property type="entry name" value="EF4_III"/>
    <property type="match status" value="1"/>
</dbReference>
<dbReference type="CDD" id="cd01890">
    <property type="entry name" value="LepA"/>
    <property type="match status" value="1"/>
</dbReference>
<dbReference type="CDD" id="cd03709">
    <property type="entry name" value="lepA_C"/>
    <property type="match status" value="1"/>
</dbReference>
<dbReference type="FunFam" id="3.40.50.300:FF:000078">
    <property type="entry name" value="Elongation factor 4"/>
    <property type="match status" value="1"/>
</dbReference>
<dbReference type="FunFam" id="2.40.30.10:FF:000015">
    <property type="entry name" value="Translation factor GUF1, mitochondrial"/>
    <property type="match status" value="1"/>
</dbReference>
<dbReference type="FunFam" id="3.30.70.240:FF:000007">
    <property type="entry name" value="Translation factor GUF1, mitochondrial"/>
    <property type="match status" value="1"/>
</dbReference>
<dbReference type="FunFam" id="3.30.70.2570:FF:000001">
    <property type="entry name" value="Translation factor GUF1, mitochondrial"/>
    <property type="match status" value="1"/>
</dbReference>
<dbReference type="FunFam" id="3.30.70.870:FF:000004">
    <property type="entry name" value="Translation factor GUF1, mitochondrial"/>
    <property type="match status" value="1"/>
</dbReference>
<dbReference type="Gene3D" id="3.30.70.240">
    <property type="match status" value="1"/>
</dbReference>
<dbReference type="Gene3D" id="3.30.70.2570">
    <property type="entry name" value="Elongation factor 4, C-terminal domain"/>
    <property type="match status" value="1"/>
</dbReference>
<dbReference type="Gene3D" id="3.30.70.870">
    <property type="entry name" value="Elongation Factor G (Translational Gtpase), domain 3"/>
    <property type="match status" value="1"/>
</dbReference>
<dbReference type="Gene3D" id="3.40.50.300">
    <property type="entry name" value="P-loop containing nucleotide triphosphate hydrolases"/>
    <property type="match status" value="1"/>
</dbReference>
<dbReference type="Gene3D" id="2.40.30.10">
    <property type="entry name" value="Translation factors"/>
    <property type="match status" value="1"/>
</dbReference>
<dbReference type="HAMAP" id="MF_00071">
    <property type="entry name" value="LepA"/>
    <property type="match status" value="1"/>
</dbReference>
<dbReference type="InterPro" id="IPR006297">
    <property type="entry name" value="EF-4"/>
</dbReference>
<dbReference type="InterPro" id="IPR035647">
    <property type="entry name" value="EFG_III/V"/>
</dbReference>
<dbReference type="InterPro" id="IPR000640">
    <property type="entry name" value="EFG_V-like"/>
</dbReference>
<dbReference type="InterPro" id="IPR004161">
    <property type="entry name" value="EFTu-like_2"/>
</dbReference>
<dbReference type="InterPro" id="IPR031157">
    <property type="entry name" value="G_TR_CS"/>
</dbReference>
<dbReference type="InterPro" id="IPR038363">
    <property type="entry name" value="LepA_C_sf"/>
</dbReference>
<dbReference type="InterPro" id="IPR013842">
    <property type="entry name" value="LepA_CTD"/>
</dbReference>
<dbReference type="InterPro" id="IPR035654">
    <property type="entry name" value="LepA_IV"/>
</dbReference>
<dbReference type="InterPro" id="IPR027417">
    <property type="entry name" value="P-loop_NTPase"/>
</dbReference>
<dbReference type="InterPro" id="IPR005225">
    <property type="entry name" value="Small_GTP-bd"/>
</dbReference>
<dbReference type="InterPro" id="IPR000795">
    <property type="entry name" value="T_Tr_GTP-bd_dom"/>
</dbReference>
<dbReference type="InterPro" id="IPR009000">
    <property type="entry name" value="Transl_B-barrel_sf"/>
</dbReference>
<dbReference type="NCBIfam" id="TIGR01393">
    <property type="entry name" value="lepA"/>
    <property type="match status" value="1"/>
</dbReference>
<dbReference type="NCBIfam" id="TIGR00231">
    <property type="entry name" value="small_GTP"/>
    <property type="match status" value="1"/>
</dbReference>
<dbReference type="PANTHER" id="PTHR43512:SF4">
    <property type="entry name" value="TRANSLATION FACTOR GUF1 HOMOLOG, CHLOROPLASTIC"/>
    <property type="match status" value="1"/>
</dbReference>
<dbReference type="PANTHER" id="PTHR43512">
    <property type="entry name" value="TRANSLATION FACTOR GUF1-RELATED"/>
    <property type="match status" value="1"/>
</dbReference>
<dbReference type="Pfam" id="PF00679">
    <property type="entry name" value="EFG_C"/>
    <property type="match status" value="1"/>
</dbReference>
<dbReference type="Pfam" id="PF00009">
    <property type="entry name" value="GTP_EFTU"/>
    <property type="match status" value="1"/>
</dbReference>
<dbReference type="Pfam" id="PF03144">
    <property type="entry name" value="GTP_EFTU_D2"/>
    <property type="match status" value="1"/>
</dbReference>
<dbReference type="Pfam" id="PF06421">
    <property type="entry name" value="LepA_C"/>
    <property type="match status" value="1"/>
</dbReference>
<dbReference type="PRINTS" id="PR00315">
    <property type="entry name" value="ELONGATNFCT"/>
</dbReference>
<dbReference type="SMART" id="SM00838">
    <property type="entry name" value="EFG_C"/>
    <property type="match status" value="1"/>
</dbReference>
<dbReference type="SUPFAM" id="SSF54980">
    <property type="entry name" value="EF-G C-terminal domain-like"/>
    <property type="match status" value="2"/>
</dbReference>
<dbReference type="SUPFAM" id="SSF52540">
    <property type="entry name" value="P-loop containing nucleoside triphosphate hydrolases"/>
    <property type="match status" value="1"/>
</dbReference>
<dbReference type="SUPFAM" id="SSF50447">
    <property type="entry name" value="Translation proteins"/>
    <property type="match status" value="1"/>
</dbReference>
<dbReference type="PROSITE" id="PS00301">
    <property type="entry name" value="G_TR_1"/>
    <property type="match status" value="1"/>
</dbReference>
<dbReference type="PROSITE" id="PS51722">
    <property type="entry name" value="G_TR_2"/>
    <property type="match status" value="1"/>
</dbReference>
<feature type="chain" id="PRO_1000075151" description="Elongation factor 4">
    <location>
        <begin position="1"/>
        <end position="607"/>
    </location>
</feature>
<feature type="domain" description="tr-type G">
    <location>
        <begin position="11"/>
        <end position="193"/>
    </location>
</feature>
<feature type="binding site" evidence="1">
    <location>
        <begin position="23"/>
        <end position="28"/>
    </location>
    <ligand>
        <name>GTP</name>
        <dbReference type="ChEBI" id="CHEBI:37565"/>
    </ligand>
</feature>
<feature type="binding site" evidence="1">
    <location>
        <begin position="140"/>
        <end position="143"/>
    </location>
    <ligand>
        <name>GTP</name>
        <dbReference type="ChEBI" id="CHEBI:37565"/>
    </ligand>
</feature>
<gene>
    <name evidence="1" type="primary">lepA</name>
    <name type="ordered locus">SaurJH1_1677</name>
</gene>
<name>LEPA_STAA2</name>
<organism>
    <name type="scientific">Staphylococcus aureus (strain JH1)</name>
    <dbReference type="NCBI Taxonomy" id="359787"/>
    <lineage>
        <taxon>Bacteria</taxon>
        <taxon>Bacillati</taxon>
        <taxon>Bacillota</taxon>
        <taxon>Bacilli</taxon>
        <taxon>Bacillales</taxon>
        <taxon>Staphylococcaceae</taxon>
        <taxon>Staphylococcus</taxon>
    </lineage>
</organism>
<protein>
    <recommendedName>
        <fullName evidence="1">Elongation factor 4</fullName>
        <shortName evidence="1">EF-4</shortName>
        <ecNumber evidence="1">3.6.5.n1</ecNumber>
    </recommendedName>
    <alternativeName>
        <fullName evidence="1">Ribosomal back-translocase LepA</fullName>
    </alternativeName>
</protein>
<proteinExistence type="inferred from homology"/>